<comment type="catalytic activity">
    <reaction>
        <text>tRNA(His) + L-histidine + ATP = L-histidyl-tRNA(His) + AMP + diphosphate + H(+)</text>
        <dbReference type="Rhea" id="RHEA:17313"/>
        <dbReference type="Rhea" id="RHEA-COMP:9665"/>
        <dbReference type="Rhea" id="RHEA-COMP:9689"/>
        <dbReference type="ChEBI" id="CHEBI:15378"/>
        <dbReference type="ChEBI" id="CHEBI:30616"/>
        <dbReference type="ChEBI" id="CHEBI:33019"/>
        <dbReference type="ChEBI" id="CHEBI:57595"/>
        <dbReference type="ChEBI" id="CHEBI:78442"/>
        <dbReference type="ChEBI" id="CHEBI:78527"/>
        <dbReference type="ChEBI" id="CHEBI:456215"/>
        <dbReference type="EC" id="6.1.1.21"/>
    </reaction>
</comment>
<comment type="subunit">
    <text evidence="1">Homodimer.</text>
</comment>
<comment type="subcellular location">
    <subcellularLocation>
        <location evidence="1">Cytoplasm</location>
    </subcellularLocation>
</comment>
<comment type="similarity">
    <text evidence="2">Belongs to the class-II aminoacyl-tRNA synthetase family.</text>
</comment>
<dbReference type="EC" id="6.1.1.21"/>
<dbReference type="EMBL" id="BA000033">
    <property type="protein sequence ID" value="BAB95446.1"/>
    <property type="molecule type" value="Genomic_DNA"/>
</dbReference>
<dbReference type="RefSeq" id="WP_000590826.1">
    <property type="nucleotide sequence ID" value="NC_003923.1"/>
</dbReference>
<dbReference type="SMR" id="P60912"/>
<dbReference type="KEGG" id="sam:MW1581"/>
<dbReference type="HOGENOM" id="CLU_025113_1_1_9"/>
<dbReference type="GO" id="GO:0005737">
    <property type="term" value="C:cytoplasm"/>
    <property type="evidence" value="ECO:0007669"/>
    <property type="project" value="UniProtKB-SubCell"/>
</dbReference>
<dbReference type="GO" id="GO:0005524">
    <property type="term" value="F:ATP binding"/>
    <property type="evidence" value="ECO:0007669"/>
    <property type="project" value="UniProtKB-UniRule"/>
</dbReference>
<dbReference type="GO" id="GO:0140096">
    <property type="term" value="F:catalytic activity, acting on a protein"/>
    <property type="evidence" value="ECO:0007669"/>
    <property type="project" value="UniProtKB-ARBA"/>
</dbReference>
<dbReference type="GO" id="GO:0004821">
    <property type="term" value="F:histidine-tRNA ligase activity"/>
    <property type="evidence" value="ECO:0007669"/>
    <property type="project" value="UniProtKB-UniRule"/>
</dbReference>
<dbReference type="GO" id="GO:0016740">
    <property type="term" value="F:transferase activity"/>
    <property type="evidence" value="ECO:0007669"/>
    <property type="project" value="UniProtKB-ARBA"/>
</dbReference>
<dbReference type="GO" id="GO:0006427">
    <property type="term" value="P:histidyl-tRNA aminoacylation"/>
    <property type="evidence" value="ECO:0007669"/>
    <property type="project" value="UniProtKB-UniRule"/>
</dbReference>
<dbReference type="CDD" id="cd00738">
    <property type="entry name" value="HGTP_anticodon"/>
    <property type="match status" value="1"/>
</dbReference>
<dbReference type="CDD" id="cd00773">
    <property type="entry name" value="HisRS-like_core"/>
    <property type="match status" value="1"/>
</dbReference>
<dbReference type="FunFam" id="3.30.930.10:FF:000005">
    <property type="entry name" value="Histidine--tRNA ligase"/>
    <property type="match status" value="1"/>
</dbReference>
<dbReference type="Gene3D" id="3.40.50.800">
    <property type="entry name" value="Anticodon-binding domain"/>
    <property type="match status" value="1"/>
</dbReference>
<dbReference type="Gene3D" id="3.30.930.10">
    <property type="entry name" value="Bira Bifunctional Protein, Domain 2"/>
    <property type="match status" value="1"/>
</dbReference>
<dbReference type="HAMAP" id="MF_00127">
    <property type="entry name" value="His_tRNA_synth"/>
    <property type="match status" value="1"/>
</dbReference>
<dbReference type="InterPro" id="IPR006195">
    <property type="entry name" value="aa-tRNA-synth_II"/>
</dbReference>
<dbReference type="InterPro" id="IPR045864">
    <property type="entry name" value="aa-tRNA-synth_II/BPL/LPL"/>
</dbReference>
<dbReference type="InterPro" id="IPR004154">
    <property type="entry name" value="Anticodon-bd"/>
</dbReference>
<dbReference type="InterPro" id="IPR036621">
    <property type="entry name" value="Anticodon-bd_dom_sf"/>
</dbReference>
<dbReference type="InterPro" id="IPR015807">
    <property type="entry name" value="His-tRNA-ligase"/>
</dbReference>
<dbReference type="InterPro" id="IPR041715">
    <property type="entry name" value="HisRS-like_core"/>
</dbReference>
<dbReference type="InterPro" id="IPR004516">
    <property type="entry name" value="HisRS/HisZ"/>
</dbReference>
<dbReference type="NCBIfam" id="TIGR00442">
    <property type="entry name" value="hisS"/>
    <property type="match status" value="1"/>
</dbReference>
<dbReference type="PANTHER" id="PTHR43707:SF1">
    <property type="entry name" value="HISTIDINE--TRNA LIGASE, MITOCHONDRIAL-RELATED"/>
    <property type="match status" value="1"/>
</dbReference>
<dbReference type="PANTHER" id="PTHR43707">
    <property type="entry name" value="HISTIDYL-TRNA SYNTHETASE"/>
    <property type="match status" value="1"/>
</dbReference>
<dbReference type="Pfam" id="PF03129">
    <property type="entry name" value="HGTP_anticodon"/>
    <property type="match status" value="1"/>
</dbReference>
<dbReference type="Pfam" id="PF13393">
    <property type="entry name" value="tRNA-synt_His"/>
    <property type="match status" value="1"/>
</dbReference>
<dbReference type="PIRSF" id="PIRSF001549">
    <property type="entry name" value="His-tRNA_synth"/>
    <property type="match status" value="1"/>
</dbReference>
<dbReference type="SUPFAM" id="SSF52954">
    <property type="entry name" value="Class II aaRS ABD-related"/>
    <property type="match status" value="1"/>
</dbReference>
<dbReference type="SUPFAM" id="SSF55681">
    <property type="entry name" value="Class II aaRS and biotin synthetases"/>
    <property type="match status" value="1"/>
</dbReference>
<dbReference type="PROSITE" id="PS50862">
    <property type="entry name" value="AA_TRNA_LIGASE_II"/>
    <property type="match status" value="1"/>
</dbReference>
<protein>
    <recommendedName>
        <fullName>Histidine--tRNA ligase</fullName>
        <ecNumber>6.1.1.21</ecNumber>
    </recommendedName>
    <alternativeName>
        <fullName>Histidyl-tRNA synthetase</fullName>
        <shortName>HisRS</shortName>
    </alternativeName>
</protein>
<organism>
    <name type="scientific">Staphylococcus aureus (strain MW2)</name>
    <dbReference type="NCBI Taxonomy" id="196620"/>
    <lineage>
        <taxon>Bacteria</taxon>
        <taxon>Bacillati</taxon>
        <taxon>Bacillota</taxon>
        <taxon>Bacilli</taxon>
        <taxon>Bacillales</taxon>
        <taxon>Staphylococcaceae</taxon>
        <taxon>Staphylococcus</taxon>
    </lineage>
</organism>
<name>SYH_STAAW</name>
<feature type="chain" id="PRO_0000136254" description="Histidine--tRNA ligase">
    <location>
        <begin position="1"/>
        <end position="420"/>
    </location>
</feature>
<feature type="disulfide bond" evidence="1">
    <location>
        <begin position="191"/>
        <end position="194"/>
    </location>
</feature>
<keyword id="KW-0030">Aminoacyl-tRNA synthetase</keyword>
<keyword id="KW-0067">ATP-binding</keyword>
<keyword id="KW-0963">Cytoplasm</keyword>
<keyword id="KW-1015">Disulfide bond</keyword>
<keyword id="KW-0436">Ligase</keyword>
<keyword id="KW-0547">Nucleotide-binding</keyword>
<keyword id="KW-0648">Protein biosynthesis</keyword>
<reference key="1">
    <citation type="journal article" date="2002" name="Lancet">
        <title>Genome and virulence determinants of high virulence community-acquired MRSA.</title>
        <authorList>
            <person name="Baba T."/>
            <person name="Takeuchi F."/>
            <person name="Kuroda M."/>
            <person name="Yuzawa H."/>
            <person name="Aoki K."/>
            <person name="Oguchi A."/>
            <person name="Nagai Y."/>
            <person name="Iwama N."/>
            <person name="Asano K."/>
            <person name="Naimi T."/>
            <person name="Kuroda H."/>
            <person name="Cui L."/>
            <person name="Yamamoto K."/>
            <person name="Hiramatsu K."/>
        </authorList>
    </citation>
    <scope>NUCLEOTIDE SEQUENCE [LARGE SCALE GENOMIC DNA]</scope>
    <source>
        <strain>MW2</strain>
    </source>
</reference>
<evidence type="ECO:0000250" key="1"/>
<evidence type="ECO:0000305" key="2"/>
<sequence length="420" mass="48283">MIKIPRGTQDILPEDSKKWRYIENQLDELMTFYNYKEIRTPIFESTDLFARGVGDSTDVVQKEMYTFKDKGDRSITLRPEGTAAVVRSYIEHKMQGNPNQPIKLYYNGPMFRYERKQKGRYRQFNQFGVEAIGAENPSVDAEVLAMVMHIYQSFGLKHLKLVINSVGDMASRKEYNEALVKHFEPVIHEFCSDCQSRLHTNPMRILDCKVDRDKEAIKTAPRITDFLNEESKAYYEQVKAYLDDLGIPYIEDPNLVRGLDYYTHTAFELMMDNPNYDGAITTLCGGGRYNGLLELLDGPSETGIGFALSIERLLLALEEEGIELDIEENLDLFIVTMGDQADRYAVKLLNHLRHNGIKADKDYLQRKIKGQMKQADRLGAKFTIVIGDQELENNKIDVKNMTTGESETIELDALVEYFKK</sequence>
<gene>
    <name type="primary">hisS</name>
    <name type="ordered locus">MW1581</name>
</gene>
<proteinExistence type="inferred from homology"/>
<accession>P60912</accession>
<accession>O32422</accession>